<comment type="similarity">
    <text evidence="1">Belongs to the UPF0304 family.</text>
</comment>
<protein>
    <recommendedName>
        <fullName evidence="1">UPF0304 protein YPTS_2689</fullName>
    </recommendedName>
</protein>
<dbReference type="EMBL" id="CP001048">
    <property type="protein sequence ID" value="ACC89649.1"/>
    <property type="molecule type" value="Genomic_DNA"/>
</dbReference>
<dbReference type="RefSeq" id="WP_002210286.1">
    <property type="nucleotide sequence ID" value="NZ_CP009780.1"/>
</dbReference>
<dbReference type="SMR" id="B2K828"/>
<dbReference type="KEGG" id="ypb:YPTS_2689"/>
<dbReference type="PATRIC" id="fig|502801.10.peg.2110"/>
<dbReference type="Gene3D" id="1.10.287.680">
    <property type="entry name" value="Helix hairpin bin"/>
    <property type="match status" value="1"/>
</dbReference>
<dbReference type="Gene3D" id="1.10.3190.10">
    <property type="entry name" value="yfbu gene product, domain 2"/>
    <property type="match status" value="1"/>
</dbReference>
<dbReference type="HAMAP" id="MF_00762">
    <property type="entry name" value="UPF0304"/>
    <property type="match status" value="1"/>
</dbReference>
<dbReference type="InterPro" id="IPR005587">
    <property type="entry name" value="UPF0304_YfbU"/>
</dbReference>
<dbReference type="InterPro" id="IPR023146">
    <property type="entry name" value="YfbU_alpha-helical_sf"/>
</dbReference>
<dbReference type="InterPro" id="IPR023145">
    <property type="entry name" value="YfbU_helix-hairpin_sf"/>
</dbReference>
<dbReference type="NCBIfam" id="NF003936">
    <property type="entry name" value="PRK05445.1"/>
    <property type="match status" value="1"/>
</dbReference>
<dbReference type="Pfam" id="PF03887">
    <property type="entry name" value="YfbU"/>
    <property type="match status" value="1"/>
</dbReference>
<dbReference type="PIRSF" id="PIRSF006272">
    <property type="entry name" value="UCP006272"/>
    <property type="match status" value="1"/>
</dbReference>
<dbReference type="SUPFAM" id="SSF116960">
    <property type="entry name" value="YfbU-like"/>
    <property type="match status" value="1"/>
</dbReference>
<accession>B2K828</accession>
<reference key="1">
    <citation type="submission" date="2008-04" db="EMBL/GenBank/DDBJ databases">
        <title>Complete sequence of Yersinia pseudotuberculosis PB1/+.</title>
        <authorList>
            <person name="Copeland A."/>
            <person name="Lucas S."/>
            <person name="Lapidus A."/>
            <person name="Glavina del Rio T."/>
            <person name="Dalin E."/>
            <person name="Tice H."/>
            <person name="Bruce D."/>
            <person name="Goodwin L."/>
            <person name="Pitluck S."/>
            <person name="Munk A.C."/>
            <person name="Brettin T."/>
            <person name="Detter J.C."/>
            <person name="Han C."/>
            <person name="Tapia R."/>
            <person name="Schmutz J."/>
            <person name="Larimer F."/>
            <person name="Land M."/>
            <person name="Hauser L."/>
            <person name="Challacombe J.F."/>
            <person name="Green L."/>
            <person name="Lindler L.E."/>
            <person name="Nikolich M.P."/>
            <person name="Richardson P."/>
        </authorList>
    </citation>
    <scope>NUCLEOTIDE SEQUENCE [LARGE SCALE GENOMIC DNA]</scope>
    <source>
        <strain>PB1/+</strain>
    </source>
</reference>
<proteinExistence type="inferred from homology"/>
<feature type="chain" id="PRO_1000198349" description="UPF0304 protein YPTS_2689">
    <location>
        <begin position="1"/>
        <end position="164"/>
    </location>
</feature>
<sequence>MDMTNAQRLILSNQYKMMTMLDPENAERYRRQQTIVERGFGLQMRELDRDFGEMSEDTCRTIINIMEMHHALQVSWGNLKEKQDLDERRISFLGFDAATESRYLSYVRFMVNTEGRYTHFDSGTHGFNSQTPMWDKYQRMLAIWQSCPRQYHLSAVEISQIINA</sequence>
<organism>
    <name type="scientific">Yersinia pseudotuberculosis serotype IB (strain PB1/+)</name>
    <dbReference type="NCBI Taxonomy" id="502801"/>
    <lineage>
        <taxon>Bacteria</taxon>
        <taxon>Pseudomonadati</taxon>
        <taxon>Pseudomonadota</taxon>
        <taxon>Gammaproteobacteria</taxon>
        <taxon>Enterobacterales</taxon>
        <taxon>Yersiniaceae</taxon>
        <taxon>Yersinia</taxon>
    </lineage>
</organism>
<gene>
    <name type="ordered locus">YPTS_2689</name>
</gene>
<name>Y2689_YERPB</name>
<evidence type="ECO:0000255" key="1">
    <source>
        <dbReference type="HAMAP-Rule" id="MF_00762"/>
    </source>
</evidence>